<keyword id="KW-0997">Cell inner membrane</keyword>
<keyword id="KW-1003">Cell membrane</keyword>
<keyword id="KW-0472">Membrane</keyword>
<keyword id="KW-1185">Reference proteome</keyword>
<keyword id="KW-0812">Transmembrane</keyword>
<keyword id="KW-1133">Transmembrane helix</keyword>
<keyword id="KW-0813">Transport</keyword>
<name>ENTS_SALTY</name>
<sequence>MNRQSWLLNLSLLKTHPAFRAVFLARFISIVSLGLLGVAVPVQIQMMTHSTWQVGLSVTLTGGAMFIGLMVGGVLADRYERKKVILLARGTCGIGFIGLCVNALLPEPSLLAIYLLGLWDGFFASLGVTALLAATPALVGRENLMQAGAITMLTVRLGSVISPMLGGILLASGGVAWNYGLAAAGTFITLLPLLTLPRLPVPPQPRENPFIALLAAFRFLLASPLIGGIALLGGLVTMASAVRVLYPALAMSWQMSAAQIGLLYAAIPLGAAIGALTSGQLAHSVRPGLIMLVSTVGSFLAVGLFAIMPVWIAGVICLALFGWLSAISSLLQYTLLQTQTPENMLGRMNGLWTAQNVTGDAIGAALLGGLGAMMTPVASASVSGFGLVIIGLLLLLVLGELRRFRQTPPVSDAG</sequence>
<protein>
    <recommendedName>
        <fullName evidence="1">Enterobactin exporter EntS</fullName>
    </recommendedName>
</protein>
<reference key="1">
    <citation type="journal article" date="2001" name="Nature">
        <title>Complete genome sequence of Salmonella enterica serovar Typhimurium LT2.</title>
        <authorList>
            <person name="McClelland M."/>
            <person name="Sanderson K.E."/>
            <person name="Spieth J."/>
            <person name="Clifton S.W."/>
            <person name="Latreille P."/>
            <person name="Courtney L."/>
            <person name="Porwollik S."/>
            <person name="Ali J."/>
            <person name="Dante M."/>
            <person name="Du F."/>
            <person name="Hou S."/>
            <person name="Layman D."/>
            <person name="Leonard S."/>
            <person name="Nguyen C."/>
            <person name="Scott K."/>
            <person name="Holmes A."/>
            <person name="Grewal N."/>
            <person name="Mulvaney E."/>
            <person name="Ryan E."/>
            <person name="Sun H."/>
            <person name="Florea L."/>
            <person name="Miller W."/>
            <person name="Stoneking T."/>
            <person name="Nhan M."/>
            <person name="Waterston R."/>
            <person name="Wilson R.K."/>
        </authorList>
    </citation>
    <scope>NUCLEOTIDE SEQUENCE [LARGE SCALE GENOMIC DNA]</scope>
    <source>
        <strain>LT2 / SGSC1412 / ATCC 700720</strain>
    </source>
</reference>
<comment type="function">
    <text evidence="1">Component of an export pathway for enterobactin.</text>
</comment>
<comment type="subcellular location">
    <subcellularLocation>
        <location evidence="1">Cell inner membrane</location>
        <topology evidence="1">Multi-pass membrane protein</topology>
    </subcellularLocation>
</comment>
<comment type="similarity">
    <text evidence="1">Belongs to the major facilitator superfamily. EntS (TC 2.A.1.38) family.</text>
</comment>
<gene>
    <name evidence="1" type="primary">entS</name>
    <name type="ordered locus">STM0593</name>
</gene>
<proteinExistence type="inferred from homology"/>
<feature type="chain" id="PRO_0000227654" description="Enterobactin exporter EntS">
    <location>
        <begin position="1"/>
        <end position="414"/>
    </location>
</feature>
<feature type="topological domain" description="Cytoplasmic" evidence="1">
    <location>
        <begin position="1"/>
        <end position="21"/>
    </location>
</feature>
<feature type="transmembrane region" description="Helical" evidence="1">
    <location>
        <begin position="22"/>
        <end position="42"/>
    </location>
</feature>
<feature type="topological domain" description="Periplasmic" evidence="1">
    <location>
        <begin position="43"/>
        <end position="55"/>
    </location>
</feature>
<feature type="transmembrane region" description="Helical" evidence="1">
    <location>
        <begin position="56"/>
        <end position="76"/>
    </location>
</feature>
<feature type="topological domain" description="Cytoplasmic" evidence="1">
    <location>
        <begin position="77"/>
        <end position="83"/>
    </location>
</feature>
<feature type="transmembrane region" description="Helical" evidence="1">
    <location>
        <begin position="84"/>
        <end position="104"/>
    </location>
</feature>
<feature type="topological domain" description="Periplasmic" evidence="1">
    <location>
        <begin position="105"/>
        <end position="109"/>
    </location>
</feature>
<feature type="transmembrane region" description="Helical" evidence="1">
    <location>
        <begin position="110"/>
        <end position="130"/>
    </location>
</feature>
<feature type="topological domain" description="Cytoplasmic" evidence="1">
    <location>
        <begin position="131"/>
        <end position="156"/>
    </location>
</feature>
<feature type="transmembrane region" description="Helical" evidence="1">
    <location>
        <begin position="157"/>
        <end position="177"/>
    </location>
</feature>
<feature type="topological domain" description="Periplasmic" evidence="1">
    <location>
        <position position="178"/>
    </location>
</feature>
<feature type="transmembrane region" description="Helical" evidence="1">
    <location>
        <begin position="179"/>
        <end position="199"/>
    </location>
</feature>
<feature type="topological domain" description="Cytoplasmic" evidence="1">
    <location>
        <begin position="200"/>
        <end position="218"/>
    </location>
</feature>
<feature type="transmembrane region" description="Helical" evidence="1">
    <location>
        <begin position="219"/>
        <end position="239"/>
    </location>
</feature>
<feature type="topological domain" description="Periplasmic" evidence="1">
    <location>
        <begin position="240"/>
        <end position="256"/>
    </location>
</feature>
<feature type="transmembrane region" description="Helical" evidence="1">
    <location>
        <begin position="257"/>
        <end position="277"/>
    </location>
</feature>
<feature type="topological domain" description="Cytoplasmic" evidence="1">
    <location>
        <begin position="278"/>
        <end position="287"/>
    </location>
</feature>
<feature type="transmembrane region" description="Helical" evidence="1">
    <location>
        <begin position="288"/>
        <end position="307"/>
    </location>
</feature>
<feature type="topological domain" description="Periplasmic" evidence="1">
    <location>
        <begin position="308"/>
        <end position="313"/>
    </location>
</feature>
<feature type="transmembrane region" description="Helical" evidence="1">
    <location>
        <begin position="314"/>
        <end position="336"/>
    </location>
</feature>
<feature type="topological domain" description="Cytoplasmic" evidence="1">
    <location>
        <begin position="337"/>
        <end position="356"/>
    </location>
</feature>
<feature type="transmembrane region" description="Helical" evidence="1">
    <location>
        <begin position="357"/>
        <end position="377"/>
    </location>
</feature>
<feature type="topological domain" description="Periplasmic" evidence="1">
    <location>
        <position position="378"/>
    </location>
</feature>
<feature type="transmembrane region" description="Helical" evidence="1">
    <location>
        <begin position="379"/>
        <end position="399"/>
    </location>
</feature>
<feature type="topological domain" description="Cytoplasmic" evidence="1">
    <location>
        <begin position="400"/>
        <end position="414"/>
    </location>
</feature>
<evidence type="ECO:0000255" key="1">
    <source>
        <dbReference type="HAMAP-Rule" id="MF_01436"/>
    </source>
</evidence>
<dbReference type="EMBL" id="AE006468">
    <property type="protein sequence ID" value="AAL19544.1"/>
    <property type="molecule type" value="Genomic_DNA"/>
</dbReference>
<dbReference type="RefSeq" id="WP_001081661.1">
    <property type="nucleotide sequence ID" value="NC_003197.2"/>
</dbReference>
<dbReference type="SMR" id="Q8ZR35"/>
<dbReference type="STRING" id="99287.STM0593"/>
<dbReference type="TCDB" id="2.A.1.38.3">
    <property type="family name" value="the major facilitator superfamily (mfs)"/>
</dbReference>
<dbReference type="PaxDb" id="99287-STM0593"/>
<dbReference type="KEGG" id="stm:STM0593"/>
<dbReference type="PATRIC" id="fig|99287.12.peg.625"/>
<dbReference type="HOGENOM" id="CLU_034180_11_0_6"/>
<dbReference type="OMA" id="VQVWHVY"/>
<dbReference type="PhylomeDB" id="Q8ZR35"/>
<dbReference type="BioCyc" id="SENT99287:STM0593-MONOMER"/>
<dbReference type="Proteomes" id="UP000001014">
    <property type="component" value="Chromosome"/>
</dbReference>
<dbReference type="GO" id="GO:0005886">
    <property type="term" value="C:plasma membrane"/>
    <property type="evidence" value="ECO:0000318"/>
    <property type="project" value="GO_Central"/>
</dbReference>
<dbReference type="GO" id="GO:0015562">
    <property type="term" value="F:efflux transmembrane transporter activity"/>
    <property type="evidence" value="ECO:0000318"/>
    <property type="project" value="GO_Central"/>
</dbReference>
<dbReference type="GO" id="GO:0042931">
    <property type="term" value="F:enterobactin transmembrane transporter activity"/>
    <property type="evidence" value="ECO:0007669"/>
    <property type="project" value="InterPro"/>
</dbReference>
<dbReference type="GO" id="GO:0046677">
    <property type="term" value="P:response to antibiotic"/>
    <property type="evidence" value="ECO:0000318"/>
    <property type="project" value="GO_Central"/>
</dbReference>
<dbReference type="CDD" id="cd06173">
    <property type="entry name" value="MFS_MefA_like"/>
    <property type="match status" value="1"/>
</dbReference>
<dbReference type="FunFam" id="1.20.1250.20:FF:000056">
    <property type="entry name" value="Enterobactin exporter EntS"/>
    <property type="match status" value="1"/>
</dbReference>
<dbReference type="Gene3D" id="1.20.1250.20">
    <property type="entry name" value="MFS general substrate transporter like domains"/>
    <property type="match status" value="1"/>
</dbReference>
<dbReference type="HAMAP" id="MF_01436">
    <property type="entry name" value="MFS_EntS"/>
    <property type="match status" value="1"/>
</dbReference>
<dbReference type="InterPro" id="IPR023722">
    <property type="entry name" value="Enterobactin_exp_EntS"/>
</dbReference>
<dbReference type="InterPro" id="IPR020846">
    <property type="entry name" value="MFS_dom"/>
</dbReference>
<dbReference type="InterPro" id="IPR036259">
    <property type="entry name" value="MFS_trans_sf"/>
</dbReference>
<dbReference type="InterPro" id="IPR010290">
    <property type="entry name" value="TM_effector"/>
</dbReference>
<dbReference type="NCBIfam" id="NF007792">
    <property type="entry name" value="PRK10489.1"/>
    <property type="match status" value="1"/>
</dbReference>
<dbReference type="PANTHER" id="PTHR23513:SF9">
    <property type="entry name" value="ENTEROBACTIN EXPORTER ENTS"/>
    <property type="match status" value="1"/>
</dbReference>
<dbReference type="PANTHER" id="PTHR23513">
    <property type="entry name" value="INTEGRAL MEMBRANE EFFLUX PROTEIN-RELATED"/>
    <property type="match status" value="1"/>
</dbReference>
<dbReference type="Pfam" id="PF05977">
    <property type="entry name" value="MFS_3"/>
    <property type="match status" value="1"/>
</dbReference>
<dbReference type="SUPFAM" id="SSF103473">
    <property type="entry name" value="MFS general substrate transporter"/>
    <property type="match status" value="1"/>
</dbReference>
<dbReference type="PROSITE" id="PS50850">
    <property type="entry name" value="MFS"/>
    <property type="match status" value="1"/>
</dbReference>
<accession>Q8ZR35</accession>
<organism>
    <name type="scientific">Salmonella typhimurium (strain LT2 / SGSC1412 / ATCC 700720)</name>
    <dbReference type="NCBI Taxonomy" id="99287"/>
    <lineage>
        <taxon>Bacteria</taxon>
        <taxon>Pseudomonadati</taxon>
        <taxon>Pseudomonadota</taxon>
        <taxon>Gammaproteobacteria</taxon>
        <taxon>Enterobacterales</taxon>
        <taxon>Enterobacteriaceae</taxon>
        <taxon>Salmonella</taxon>
    </lineage>
</organism>